<evidence type="ECO:0000255" key="1">
    <source>
        <dbReference type="HAMAP-Rule" id="MF_00244"/>
    </source>
</evidence>
<feature type="chain" id="PRO_0000181439" description="Nicotinate-nucleotide adenylyltransferase">
    <location>
        <begin position="1"/>
        <end position="213"/>
    </location>
</feature>
<proteinExistence type="inferred from homology"/>
<protein>
    <recommendedName>
        <fullName>Nicotinate-nucleotide adenylyltransferase</fullName>
        <ecNumber evidence="1">2.7.7.18</ecNumber>
    </recommendedName>
    <alternativeName>
        <fullName evidence="1">Deamido-NAD(+) diphosphorylase</fullName>
    </alternativeName>
    <alternativeName>
        <fullName evidence="1">Deamido-NAD(+) pyrophosphorylase</fullName>
    </alternativeName>
    <alternativeName>
        <fullName evidence="1">Nicotinate mononucleotide adenylyltransferase</fullName>
        <shortName evidence="1">NaMN adenylyltransferase</shortName>
    </alternativeName>
</protein>
<dbReference type="EC" id="2.7.7.18" evidence="1"/>
<dbReference type="EMBL" id="AE006468">
    <property type="protein sequence ID" value="AAL19596.1"/>
    <property type="molecule type" value="Genomic_DNA"/>
</dbReference>
<dbReference type="RefSeq" id="NP_459637.1">
    <property type="nucleotide sequence ID" value="NC_003197.2"/>
</dbReference>
<dbReference type="RefSeq" id="WP_001518902.1">
    <property type="nucleotide sequence ID" value="NC_003197.2"/>
</dbReference>
<dbReference type="SMR" id="Q8ZQZ8"/>
<dbReference type="STRING" id="99287.STM0645"/>
<dbReference type="PaxDb" id="99287-STM0645"/>
<dbReference type="GeneID" id="1252165"/>
<dbReference type="KEGG" id="stm:STM0645"/>
<dbReference type="PATRIC" id="fig|99287.12.peg.681"/>
<dbReference type="HOGENOM" id="CLU_069765_0_0_6"/>
<dbReference type="OMA" id="WIMGADS"/>
<dbReference type="PhylomeDB" id="Q8ZQZ8"/>
<dbReference type="BioCyc" id="SENT99287:STM0645-MONOMER"/>
<dbReference type="UniPathway" id="UPA00253">
    <property type="reaction ID" value="UER00332"/>
</dbReference>
<dbReference type="Proteomes" id="UP000001014">
    <property type="component" value="Chromosome"/>
</dbReference>
<dbReference type="GO" id="GO:0005524">
    <property type="term" value="F:ATP binding"/>
    <property type="evidence" value="ECO:0007669"/>
    <property type="project" value="UniProtKB-KW"/>
</dbReference>
<dbReference type="GO" id="GO:0000309">
    <property type="term" value="F:nicotinamide-nucleotide adenylyltransferase activity"/>
    <property type="evidence" value="ECO:0000318"/>
    <property type="project" value="GO_Central"/>
</dbReference>
<dbReference type="GO" id="GO:0004515">
    <property type="term" value="F:nicotinate-nucleotide adenylyltransferase activity"/>
    <property type="evidence" value="ECO:0000318"/>
    <property type="project" value="GO_Central"/>
</dbReference>
<dbReference type="GO" id="GO:0009435">
    <property type="term" value="P:NAD biosynthetic process"/>
    <property type="evidence" value="ECO:0000318"/>
    <property type="project" value="GO_Central"/>
</dbReference>
<dbReference type="CDD" id="cd02165">
    <property type="entry name" value="NMNAT"/>
    <property type="match status" value="1"/>
</dbReference>
<dbReference type="FunFam" id="3.40.50.620:FF:000039">
    <property type="entry name" value="Probable nicotinate-nucleotide adenylyltransferase"/>
    <property type="match status" value="1"/>
</dbReference>
<dbReference type="Gene3D" id="3.40.50.620">
    <property type="entry name" value="HUPs"/>
    <property type="match status" value="1"/>
</dbReference>
<dbReference type="HAMAP" id="MF_00244">
    <property type="entry name" value="NaMN_adenylyltr"/>
    <property type="match status" value="1"/>
</dbReference>
<dbReference type="InterPro" id="IPR004821">
    <property type="entry name" value="Cyt_trans-like"/>
</dbReference>
<dbReference type="InterPro" id="IPR005248">
    <property type="entry name" value="NadD/NMNAT"/>
</dbReference>
<dbReference type="InterPro" id="IPR014729">
    <property type="entry name" value="Rossmann-like_a/b/a_fold"/>
</dbReference>
<dbReference type="NCBIfam" id="TIGR00125">
    <property type="entry name" value="cyt_tran_rel"/>
    <property type="match status" value="1"/>
</dbReference>
<dbReference type="NCBIfam" id="TIGR00482">
    <property type="entry name" value="nicotinate (nicotinamide) nucleotide adenylyltransferase"/>
    <property type="match status" value="1"/>
</dbReference>
<dbReference type="NCBIfam" id="NF000839">
    <property type="entry name" value="PRK00071.1-1"/>
    <property type="match status" value="1"/>
</dbReference>
<dbReference type="NCBIfam" id="NF000840">
    <property type="entry name" value="PRK00071.1-3"/>
    <property type="match status" value="1"/>
</dbReference>
<dbReference type="PANTHER" id="PTHR39321">
    <property type="entry name" value="NICOTINATE-NUCLEOTIDE ADENYLYLTRANSFERASE-RELATED"/>
    <property type="match status" value="1"/>
</dbReference>
<dbReference type="PANTHER" id="PTHR39321:SF3">
    <property type="entry name" value="PHOSPHOPANTETHEINE ADENYLYLTRANSFERASE"/>
    <property type="match status" value="1"/>
</dbReference>
<dbReference type="Pfam" id="PF01467">
    <property type="entry name" value="CTP_transf_like"/>
    <property type="match status" value="1"/>
</dbReference>
<dbReference type="SUPFAM" id="SSF52374">
    <property type="entry name" value="Nucleotidylyl transferase"/>
    <property type="match status" value="1"/>
</dbReference>
<comment type="function">
    <text evidence="1">Catalyzes the reversible adenylation of nicotinate mononucleotide (NaMN) to nicotinic acid adenine dinucleotide (NaAD).</text>
</comment>
<comment type="catalytic activity">
    <reaction evidence="1">
        <text>nicotinate beta-D-ribonucleotide + ATP + H(+) = deamido-NAD(+) + diphosphate</text>
        <dbReference type="Rhea" id="RHEA:22860"/>
        <dbReference type="ChEBI" id="CHEBI:15378"/>
        <dbReference type="ChEBI" id="CHEBI:30616"/>
        <dbReference type="ChEBI" id="CHEBI:33019"/>
        <dbReference type="ChEBI" id="CHEBI:57502"/>
        <dbReference type="ChEBI" id="CHEBI:58437"/>
        <dbReference type="EC" id="2.7.7.18"/>
    </reaction>
</comment>
<comment type="pathway">
    <text evidence="1">Cofactor biosynthesis; NAD(+) biosynthesis; deamido-NAD(+) from nicotinate D-ribonucleotide: step 1/1.</text>
</comment>
<comment type="similarity">
    <text evidence="1">Belongs to the NadD family.</text>
</comment>
<name>NADD_SALTY</name>
<accession>Q8ZQZ8</accession>
<gene>
    <name evidence="1" type="primary">nadD</name>
    <name type="ordered locus">STM0645</name>
</gene>
<sequence>MKSLQALFGGTFDPVHYGHLKPVETLANLIGLSRVIIMPNNVPPHRPQPEASSAQRKYMLELAIADKPLFTLDERELQRNAPSYTAQTLKAWREEQGPEAPLAFIIGQDSLLNFPTWHDYDTILDNTHLIVCRRPGYPLEMTQAQHQQWLEQHLTHTPDDLHQLPAGKIYLAETPWLNISATLIRERLEKGESCDDLLPENVLNYINQQGLYR</sequence>
<reference key="1">
    <citation type="journal article" date="2001" name="Nature">
        <title>Complete genome sequence of Salmonella enterica serovar Typhimurium LT2.</title>
        <authorList>
            <person name="McClelland M."/>
            <person name="Sanderson K.E."/>
            <person name="Spieth J."/>
            <person name="Clifton S.W."/>
            <person name="Latreille P."/>
            <person name="Courtney L."/>
            <person name="Porwollik S."/>
            <person name="Ali J."/>
            <person name="Dante M."/>
            <person name="Du F."/>
            <person name="Hou S."/>
            <person name="Layman D."/>
            <person name="Leonard S."/>
            <person name="Nguyen C."/>
            <person name="Scott K."/>
            <person name="Holmes A."/>
            <person name="Grewal N."/>
            <person name="Mulvaney E."/>
            <person name="Ryan E."/>
            <person name="Sun H."/>
            <person name="Florea L."/>
            <person name="Miller W."/>
            <person name="Stoneking T."/>
            <person name="Nhan M."/>
            <person name="Waterston R."/>
            <person name="Wilson R.K."/>
        </authorList>
    </citation>
    <scope>NUCLEOTIDE SEQUENCE [LARGE SCALE GENOMIC DNA]</scope>
    <source>
        <strain>LT2 / SGSC1412 / ATCC 700720</strain>
    </source>
</reference>
<keyword id="KW-0067">ATP-binding</keyword>
<keyword id="KW-0520">NAD</keyword>
<keyword id="KW-0547">Nucleotide-binding</keyword>
<keyword id="KW-0548">Nucleotidyltransferase</keyword>
<keyword id="KW-0662">Pyridine nucleotide biosynthesis</keyword>
<keyword id="KW-1185">Reference proteome</keyword>
<keyword id="KW-0808">Transferase</keyword>
<organism>
    <name type="scientific">Salmonella typhimurium (strain LT2 / SGSC1412 / ATCC 700720)</name>
    <dbReference type="NCBI Taxonomy" id="99287"/>
    <lineage>
        <taxon>Bacteria</taxon>
        <taxon>Pseudomonadati</taxon>
        <taxon>Pseudomonadota</taxon>
        <taxon>Gammaproteobacteria</taxon>
        <taxon>Enterobacterales</taxon>
        <taxon>Enterobacteriaceae</taxon>
        <taxon>Salmonella</taxon>
    </lineage>
</organism>